<name>PSTB_CYTH3</name>
<reference key="1">
    <citation type="journal article" date="2007" name="Appl. Environ. Microbiol.">
        <title>Genome sequence of the cellulolytic gliding bacterium Cytophaga hutchinsonii.</title>
        <authorList>
            <person name="Xie G."/>
            <person name="Bruce D.C."/>
            <person name="Challacombe J.F."/>
            <person name="Chertkov O."/>
            <person name="Detter J.C."/>
            <person name="Gilna P."/>
            <person name="Han C.S."/>
            <person name="Lucas S."/>
            <person name="Misra M."/>
            <person name="Myers G.L."/>
            <person name="Richardson P."/>
            <person name="Tapia R."/>
            <person name="Thayer N."/>
            <person name="Thompson L.S."/>
            <person name="Brettin T.S."/>
            <person name="Henrissat B."/>
            <person name="Wilson D.B."/>
            <person name="McBride M.J."/>
        </authorList>
    </citation>
    <scope>NUCLEOTIDE SEQUENCE [LARGE SCALE GENOMIC DNA]</scope>
    <source>
        <strain>ATCC 33406 / DSM 1761 / JCM 20678 / CIP 103989 / IAM 12607 / NBRC 15051 / NCIMB 9469 / D465</strain>
    </source>
</reference>
<organism>
    <name type="scientific">Cytophaga hutchinsonii (strain ATCC 33406 / DSM 1761 / CIP 103989 / NBRC 15051 / NCIMB 9469 / D465)</name>
    <dbReference type="NCBI Taxonomy" id="269798"/>
    <lineage>
        <taxon>Bacteria</taxon>
        <taxon>Pseudomonadati</taxon>
        <taxon>Bacteroidota</taxon>
        <taxon>Cytophagia</taxon>
        <taxon>Cytophagales</taxon>
        <taxon>Cytophagaceae</taxon>
        <taxon>Cytophaga</taxon>
    </lineage>
</organism>
<feature type="chain" id="PRO_0000272443" description="Phosphate import ATP-binding protein PstB">
    <location>
        <begin position="1"/>
        <end position="249"/>
    </location>
</feature>
<feature type="domain" description="ABC transporter" evidence="1">
    <location>
        <begin position="3"/>
        <end position="244"/>
    </location>
</feature>
<feature type="binding site" evidence="1">
    <location>
        <begin position="35"/>
        <end position="42"/>
    </location>
    <ligand>
        <name>ATP</name>
        <dbReference type="ChEBI" id="CHEBI:30616"/>
    </ligand>
</feature>
<comment type="function">
    <text evidence="1">Part of the ABC transporter complex PstSACB involved in phosphate import. Responsible for energy coupling to the transport system.</text>
</comment>
<comment type="catalytic activity">
    <reaction evidence="1">
        <text>phosphate(out) + ATP + H2O = ADP + 2 phosphate(in) + H(+)</text>
        <dbReference type="Rhea" id="RHEA:24440"/>
        <dbReference type="ChEBI" id="CHEBI:15377"/>
        <dbReference type="ChEBI" id="CHEBI:15378"/>
        <dbReference type="ChEBI" id="CHEBI:30616"/>
        <dbReference type="ChEBI" id="CHEBI:43474"/>
        <dbReference type="ChEBI" id="CHEBI:456216"/>
        <dbReference type="EC" id="7.3.2.1"/>
    </reaction>
</comment>
<comment type="subunit">
    <text evidence="1">The complex is composed of two ATP-binding proteins (PstB), two transmembrane proteins (PstC and PstA) and a solute-binding protein (PstS).</text>
</comment>
<comment type="subcellular location">
    <subcellularLocation>
        <location evidence="1">Cell inner membrane</location>
        <topology evidence="1">Peripheral membrane protein</topology>
    </subcellularLocation>
</comment>
<comment type="similarity">
    <text evidence="1">Belongs to the ABC transporter superfamily. Phosphate importer (TC 3.A.1.7) family.</text>
</comment>
<gene>
    <name evidence="1" type="primary">pstB</name>
    <name type="ordered locus">CHU_3821</name>
</gene>
<protein>
    <recommendedName>
        <fullName evidence="1">Phosphate import ATP-binding protein PstB</fullName>
        <ecNumber evidence="1">7.3.2.1</ecNumber>
    </recommendedName>
    <alternativeName>
        <fullName evidence="1">ABC phosphate transporter</fullName>
    </alternativeName>
    <alternativeName>
        <fullName evidence="1">Phosphate-transporting ATPase</fullName>
    </alternativeName>
</protein>
<dbReference type="EC" id="7.3.2.1" evidence="1"/>
<dbReference type="EMBL" id="CP000383">
    <property type="protein sequence ID" value="ABG61053.1"/>
    <property type="molecule type" value="Genomic_DNA"/>
</dbReference>
<dbReference type="RefSeq" id="WP_011587158.1">
    <property type="nucleotide sequence ID" value="NC_008255.1"/>
</dbReference>
<dbReference type="SMR" id="Q11NG0"/>
<dbReference type="STRING" id="269798.CHU_3821"/>
<dbReference type="KEGG" id="chu:CHU_3821"/>
<dbReference type="eggNOG" id="COG1117">
    <property type="taxonomic scope" value="Bacteria"/>
</dbReference>
<dbReference type="HOGENOM" id="CLU_000604_1_22_10"/>
<dbReference type="OrthoDB" id="1115710at2"/>
<dbReference type="Proteomes" id="UP000001822">
    <property type="component" value="Chromosome"/>
</dbReference>
<dbReference type="GO" id="GO:0005886">
    <property type="term" value="C:plasma membrane"/>
    <property type="evidence" value="ECO:0007669"/>
    <property type="project" value="UniProtKB-SubCell"/>
</dbReference>
<dbReference type="GO" id="GO:0005524">
    <property type="term" value="F:ATP binding"/>
    <property type="evidence" value="ECO:0007669"/>
    <property type="project" value="UniProtKB-KW"/>
</dbReference>
<dbReference type="GO" id="GO:0016887">
    <property type="term" value="F:ATP hydrolysis activity"/>
    <property type="evidence" value="ECO:0007669"/>
    <property type="project" value="InterPro"/>
</dbReference>
<dbReference type="GO" id="GO:0015415">
    <property type="term" value="F:ATPase-coupled phosphate ion transmembrane transporter activity"/>
    <property type="evidence" value="ECO:0007669"/>
    <property type="project" value="UniProtKB-EC"/>
</dbReference>
<dbReference type="GO" id="GO:0035435">
    <property type="term" value="P:phosphate ion transmembrane transport"/>
    <property type="evidence" value="ECO:0007669"/>
    <property type="project" value="InterPro"/>
</dbReference>
<dbReference type="CDD" id="cd03260">
    <property type="entry name" value="ABC_PstB_phosphate_transporter"/>
    <property type="match status" value="1"/>
</dbReference>
<dbReference type="FunFam" id="3.40.50.300:FF:000132">
    <property type="entry name" value="Phosphate import ATP-binding protein PstB"/>
    <property type="match status" value="1"/>
</dbReference>
<dbReference type="Gene3D" id="3.40.50.300">
    <property type="entry name" value="P-loop containing nucleotide triphosphate hydrolases"/>
    <property type="match status" value="1"/>
</dbReference>
<dbReference type="InterPro" id="IPR003593">
    <property type="entry name" value="AAA+_ATPase"/>
</dbReference>
<dbReference type="InterPro" id="IPR003439">
    <property type="entry name" value="ABC_transporter-like_ATP-bd"/>
</dbReference>
<dbReference type="InterPro" id="IPR017871">
    <property type="entry name" value="ABC_transporter-like_CS"/>
</dbReference>
<dbReference type="InterPro" id="IPR027417">
    <property type="entry name" value="P-loop_NTPase"/>
</dbReference>
<dbReference type="InterPro" id="IPR005670">
    <property type="entry name" value="PstB-like"/>
</dbReference>
<dbReference type="NCBIfam" id="TIGR00972">
    <property type="entry name" value="3a0107s01c2"/>
    <property type="match status" value="1"/>
</dbReference>
<dbReference type="PANTHER" id="PTHR43423">
    <property type="entry name" value="ABC TRANSPORTER I FAMILY MEMBER 17"/>
    <property type="match status" value="1"/>
</dbReference>
<dbReference type="PANTHER" id="PTHR43423:SF1">
    <property type="entry name" value="ABC TRANSPORTER I FAMILY MEMBER 17"/>
    <property type="match status" value="1"/>
</dbReference>
<dbReference type="Pfam" id="PF00005">
    <property type="entry name" value="ABC_tran"/>
    <property type="match status" value="1"/>
</dbReference>
<dbReference type="SMART" id="SM00382">
    <property type="entry name" value="AAA"/>
    <property type="match status" value="1"/>
</dbReference>
<dbReference type="SUPFAM" id="SSF52540">
    <property type="entry name" value="P-loop containing nucleoside triphosphate hydrolases"/>
    <property type="match status" value="1"/>
</dbReference>
<dbReference type="PROSITE" id="PS00211">
    <property type="entry name" value="ABC_TRANSPORTER_1"/>
    <property type="match status" value="1"/>
</dbReference>
<dbReference type="PROSITE" id="PS50893">
    <property type="entry name" value="ABC_TRANSPORTER_2"/>
    <property type="match status" value="1"/>
</dbReference>
<dbReference type="PROSITE" id="PS51238">
    <property type="entry name" value="PSTB"/>
    <property type="match status" value="1"/>
</dbReference>
<sequence length="249" mass="27808">MKIEANDVHVYYGLDHTLKGVSLSVKKNTVTALIGPSGCGKSTFLRCMNRMNDLIDNCQVKGNILIDGVDINSPSVNTNELRKAVGMVFQKPNPFPKSIFENVAYGLRVNGVSNKEYINDKVEWSLKQAALWDEVKDKLKKSALALSGGQQQRLCIARALAVEPSILLMDEPASALDPISTSKIEELIYNLKASYTIMIVTHNMQQASRTSDKTAFFYMGELVEYDDTRTLFTNPKKKRTQNYITGRFG</sequence>
<evidence type="ECO:0000255" key="1">
    <source>
        <dbReference type="HAMAP-Rule" id="MF_01702"/>
    </source>
</evidence>
<keyword id="KW-0067">ATP-binding</keyword>
<keyword id="KW-0997">Cell inner membrane</keyword>
<keyword id="KW-1003">Cell membrane</keyword>
<keyword id="KW-0472">Membrane</keyword>
<keyword id="KW-0547">Nucleotide-binding</keyword>
<keyword id="KW-0592">Phosphate transport</keyword>
<keyword id="KW-1185">Reference proteome</keyword>
<keyword id="KW-1278">Translocase</keyword>
<keyword id="KW-0813">Transport</keyword>
<proteinExistence type="inferred from homology"/>
<accession>Q11NG0</accession>